<keyword id="KW-1185">Reference proteome</keyword>
<proteinExistence type="predicted"/>
<dbReference type="EMBL" id="CU329670">
    <property type="protein sequence ID" value="CAA92304.1"/>
    <property type="molecule type" value="Genomic_DNA"/>
</dbReference>
<dbReference type="PIR" id="T37514">
    <property type="entry name" value="T37514"/>
</dbReference>
<dbReference type="RefSeq" id="NP_592800.1">
    <property type="nucleotide sequence ID" value="NM_001018200.2"/>
</dbReference>
<dbReference type="SMR" id="Q10082"/>
<dbReference type="BioGRID" id="279387">
    <property type="interactions" value="4"/>
</dbReference>
<dbReference type="STRING" id="284812.Q10082"/>
<dbReference type="PaxDb" id="4896-SPAC11D3.03c.1"/>
<dbReference type="EnsemblFungi" id="SPAC11D3.03c.1">
    <property type="protein sequence ID" value="SPAC11D3.03c.1:pep"/>
    <property type="gene ID" value="SPAC11D3.03c"/>
</dbReference>
<dbReference type="PomBase" id="SPAC11D3.03c"/>
<dbReference type="VEuPathDB" id="FungiDB:SPAC11D3.03c"/>
<dbReference type="eggNOG" id="ENOG502QSJ0">
    <property type="taxonomic scope" value="Eukaryota"/>
</dbReference>
<dbReference type="HOGENOM" id="CLU_054069_0_0_1"/>
<dbReference type="InParanoid" id="Q10082"/>
<dbReference type="OMA" id="FMKASPV"/>
<dbReference type="PhylomeDB" id="Q10082"/>
<dbReference type="PRO" id="PR:Q10082"/>
<dbReference type="Proteomes" id="UP000002485">
    <property type="component" value="Chromosome I"/>
</dbReference>
<dbReference type="GO" id="GO:0003824">
    <property type="term" value="F:catalytic activity"/>
    <property type="evidence" value="ECO:0000255"/>
    <property type="project" value="PomBase"/>
</dbReference>
<dbReference type="InterPro" id="IPR018959">
    <property type="entry name" value="DUF1989"/>
</dbReference>
<dbReference type="PANTHER" id="PTHR31527">
    <property type="entry name" value="RE64534P"/>
    <property type="match status" value="1"/>
</dbReference>
<dbReference type="PANTHER" id="PTHR31527:SF0">
    <property type="entry name" value="RE64534P"/>
    <property type="match status" value="1"/>
</dbReference>
<dbReference type="Pfam" id="PF09347">
    <property type="entry name" value="DUF1989"/>
    <property type="match status" value="1"/>
</dbReference>
<sequence>MTEISELASSSQKPEKTKYNLPKPLPAYYPHPGSPLYADKELYARIANAPKKLVGRHVCQPRTGLAVKIPQKSIFSIVVPEGPQVCDLNIWNFHNPRERFWAARTRQIHSAHVSTYDRLWSTLPYLRPLVTIIGDSLQARHDEWGGRVHDTLGTRCDPYIDKLISGKDNDLHCHSNLTRAIMPYGLTEFDVHDVLNVFQVTGLNEYDQYFMETCPATSKDYFQCFAEQDLLVAISACPGGDLSNWGWGEDATDVESSKMVDCCRPLAIEVYELEDEENSLKGWVPPQVVNYTGNHGLKAPSS</sequence>
<gene>
    <name type="ORF">SPAC11D3.03c</name>
</gene>
<name>YAO3_SCHPO</name>
<accession>Q10082</accession>
<organism>
    <name type="scientific">Schizosaccharomyces pombe (strain 972 / ATCC 24843)</name>
    <name type="common">Fission yeast</name>
    <dbReference type="NCBI Taxonomy" id="284812"/>
    <lineage>
        <taxon>Eukaryota</taxon>
        <taxon>Fungi</taxon>
        <taxon>Dikarya</taxon>
        <taxon>Ascomycota</taxon>
        <taxon>Taphrinomycotina</taxon>
        <taxon>Schizosaccharomycetes</taxon>
        <taxon>Schizosaccharomycetales</taxon>
        <taxon>Schizosaccharomycetaceae</taxon>
        <taxon>Schizosaccharomyces</taxon>
    </lineage>
</organism>
<protein>
    <recommendedName>
        <fullName>Uncharacterized protein C11D3.03c</fullName>
    </recommendedName>
</protein>
<feature type="chain" id="PRO_0000116452" description="Uncharacterized protein C11D3.03c">
    <location>
        <begin position="1"/>
        <end position="302"/>
    </location>
</feature>
<feature type="region of interest" description="Disordered" evidence="1">
    <location>
        <begin position="1"/>
        <end position="24"/>
    </location>
</feature>
<reference key="1">
    <citation type="journal article" date="2002" name="Nature">
        <title>The genome sequence of Schizosaccharomyces pombe.</title>
        <authorList>
            <person name="Wood V."/>
            <person name="Gwilliam R."/>
            <person name="Rajandream M.A."/>
            <person name="Lyne M.H."/>
            <person name="Lyne R."/>
            <person name="Stewart A."/>
            <person name="Sgouros J.G."/>
            <person name="Peat N."/>
            <person name="Hayles J."/>
            <person name="Baker S.G."/>
            <person name="Basham D."/>
            <person name="Bowman S."/>
            <person name="Brooks K."/>
            <person name="Brown D."/>
            <person name="Brown S."/>
            <person name="Chillingworth T."/>
            <person name="Churcher C.M."/>
            <person name="Collins M."/>
            <person name="Connor R."/>
            <person name="Cronin A."/>
            <person name="Davis P."/>
            <person name="Feltwell T."/>
            <person name="Fraser A."/>
            <person name="Gentles S."/>
            <person name="Goble A."/>
            <person name="Hamlin N."/>
            <person name="Harris D.E."/>
            <person name="Hidalgo J."/>
            <person name="Hodgson G."/>
            <person name="Holroyd S."/>
            <person name="Hornsby T."/>
            <person name="Howarth S."/>
            <person name="Huckle E.J."/>
            <person name="Hunt S."/>
            <person name="Jagels K."/>
            <person name="James K.D."/>
            <person name="Jones L."/>
            <person name="Jones M."/>
            <person name="Leather S."/>
            <person name="McDonald S."/>
            <person name="McLean J."/>
            <person name="Mooney P."/>
            <person name="Moule S."/>
            <person name="Mungall K.L."/>
            <person name="Murphy L.D."/>
            <person name="Niblett D."/>
            <person name="Odell C."/>
            <person name="Oliver K."/>
            <person name="O'Neil S."/>
            <person name="Pearson D."/>
            <person name="Quail M.A."/>
            <person name="Rabbinowitsch E."/>
            <person name="Rutherford K.M."/>
            <person name="Rutter S."/>
            <person name="Saunders D."/>
            <person name="Seeger K."/>
            <person name="Sharp S."/>
            <person name="Skelton J."/>
            <person name="Simmonds M.N."/>
            <person name="Squares R."/>
            <person name="Squares S."/>
            <person name="Stevens K."/>
            <person name="Taylor K."/>
            <person name="Taylor R.G."/>
            <person name="Tivey A."/>
            <person name="Walsh S.V."/>
            <person name="Warren T."/>
            <person name="Whitehead S."/>
            <person name="Woodward J.R."/>
            <person name="Volckaert G."/>
            <person name="Aert R."/>
            <person name="Robben J."/>
            <person name="Grymonprez B."/>
            <person name="Weltjens I."/>
            <person name="Vanstreels E."/>
            <person name="Rieger M."/>
            <person name="Schaefer M."/>
            <person name="Mueller-Auer S."/>
            <person name="Gabel C."/>
            <person name="Fuchs M."/>
            <person name="Duesterhoeft A."/>
            <person name="Fritzc C."/>
            <person name="Holzer E."/>
            <person name="Moestl D."/>
            <person name="Hilbert H."/>
            <person name="Borzym K."/>
            <person name="Langer I."/>
            <person name="Beck A."/>
            <person name="Lehrach H."/>
            <person name="Reinhardt R."/>
            <person name="Pohl T.M."/>
            <person name="Eger P."/>
            <person name="Zimmermann W."/>
            <person name="Wedler H."/>
            <person name="Wambutt R."/>
            <person name="Purnelle B."/>
            <person name="Goffeau A."/>
            <person name="Cadieu E."/>
            <person name="Dreano S."/>
            <person name="Gloux S."/>
            <person name="Lelaure V."/>
            <person name="Mottier S."/>
            <person name="Galibert F."/>
            <person name="Aves S.J."/>
            <person name="Xiang Z."/>
            <person name="Hunt C."/>
            <person name="Moore K."/>
            <person name="Hurst S.M."/>
            <person name="Lucas M."/>
            <person name="Rochet M."/>
            <person name="Gaillardin C."/>
            <person name="Tallada V.A."/>
            <person name="Garzon A."/>
            <person name="Thode G."/>
            <person name="Daga R.R."/>
            <person name="Cruzado L."/>
            <person name="Jimenez J."/>
            <person name="Sanchez M."/>
            <person name="del Rey F."/>
            <person name="Benito J."/>
            <person name="Dominguez A."/>
            <person name="Revuelta J.L."/>
            <person name="Moreno S."/>
            <person name="Armstrong J."/>
            <person name="Forsburg S.L."/>
            <person name="Cerutti L."/>
            <person name="Lowe T."/>
            <person name="McCombie W.R."/>
            <person name="Paulsen I."/>
            <person name="Potashkin J."/>
            <person name="Shpakovski G.V."/>
            <person name="Ussery D."/>
            <person name="Barrell B.G."/>
            <person name="Nurse P."/>
        </authorList>
    </citation>
    <scope>NUCLEOTIDE SEQUENCE [LARGE SCALE GENOMIC DNA]</scope>
    <source>
        <strain>972 / ATCC 24843</strain>
    </source>
</reference>
<evidence type="ECO:0000256" key="1">
    <source>
        <dbReference type="SAM" id="MobiDB-lite"/>
    </source>
</evidence>